<protein>
    <recommendedName>
        <fullName evidence="7">Peroxisomal membrane protein PEX13</fullName>
    </recommendedName>
    <alternativeName>
        <fullName evidence="7">Peroxin-13</fullName>
    </alternativeName>
</protein>
<accession>D4A2Y9</accession>
<accession>A0A8I6AVL0</accession>
<evidence type="ECO:0000250" key="1">
    <source>
        <dbReference type="UniProtKB" id="P80667"/>
    </source>
</evidence>
<evidence type="ECO:0000250" key="2">
    <source>
        <dbReference type="UniProtKB" id="Q92968"/>
    </source>
</evidence>
<evidence type="ECO:0000255" key="3"/>
<evidence type="ECO:0000255" key="4">
    <source>
        <dbReference type="PROSITE-ProRule" id="PRU00192"/>
    </source>
</evidence>
<evidence type="ECO:0000256" key="5">
    <source>
        <dbReference type="SAM" id="MobiDB-lite"/>
    </source>
</evidence>
<evidence type="ECO:0000269" key="6">
    <source>
    </source>
</evidence>
<evidence type="ECO:0000305" key="7"/>
<evidence type="ECO:0000305" key="8">
    <source>
    </source>
</evidence>
<evidence type="ECO:0000312" key="9">
    <source>
        <dbReference type="RGD" id="1310682"/>
    </source>
</evidence>
<sequence length="403" mass="44264">MASQPPPPPKPWETRRIPGAGPGPGPGPTFQSADLGPTLLTRPGQPTLTRVPPPILPRPSQQTGGNNVNTFRPAYSSFSSGYGAYGNAFYGSYSPYSYGYNGLGFNRLRVDDLPPSRFVQQAEESSRGAFQSIESIVHAFASVSMMMDATFSAVYNSFRAVLDVANHFSRLKIHFTKVFSAFALVRTIRYLYRRLQWMMGLRRGSENEDLWAESEGTVACLGAEDQANNSAKSWPIFLFFAVILGGPYLIWKLLSTHSDEVTDSTNWANGEDDHVVARAEYDFAAVSDEEISFRAGDMLNLALKEQQPKVRGWLLASLDGQTTGLIPANYVKILGKRRGRKTVESSTMPKQQQSFTNPTSVKGVTTTNSLEEQEAAFESVFVETNKVAGTPDSTGKNGDKQDL</sequence>
<feature type="chain" id="PRO_0000456981" description="Peroxisomal membrane protein PEX13">
    <location>
        <begin position="1"/>
        <end position="403"/>
    </location>
</feature>
<feature type="topological domain" description="Peroxisomal matrix" evidence="8">
    <location>
        <begin position="1"/>
        <end position="134"/>
    </location>
</feature>
<feature type="transmembrane region" description="Helical" evidence="3">
    <location>
        <begin position="135"/>
        <end position="155"/>
    </location>
</feature>
<feature type="topological domain" description="Cytoplasmic" evidence="7">
    <location>
        <begin position="156"/>
        <end position="174"/>
    </location>
</feature>
<feature type="transmembrane region" description="Helical" evidence="3">
    <location>
        <begin position="175"/>
        <end position="192"/>
    </location>
</feature>
<feature type="topological domain" description="Peroxisomal matrix" evidence="7">
    <location>
        <begin position="193"/>
        <end position="233"/>
    </location>
</feature>
<feature type="transmembrane region" description="Helical" evidence="3">
    <location>
        <begin position="234"/>
        <end position="254"/>
    </location>
</feature>
<feature type="topological domain" description="Cytoplasmic" evidence="8">
    <location>
        <begin position="255"/>
        <end position="403"/>
    </location>
</feature>
<feature type="domain" description="SH3" evidence="4">
    <location>
        <begin position="272"/>
        <end position="336"/>
    </location>
</feature>
<feature type="region of interest" description="Disordered" evidence="5">
    <location>
        <begin position="1"/>
        <end position="69"/>
    </location>
</feature>
<feature type="region of interest" description="Targeting to peroxisomes" evidence="2">
    <location>
        <begin position="145"/>
        <end position="233"/>
    </location>
</feature>
<feature type="region of interest" description="Interaction with PEX19" evidence="2">
    <location>
        <begin position="175"/>
        <end position="196"/>
    </location>
</feature>
<feature type="region of interest" description="Disordered" evidence="5">
    <location>
        <begin position="341"/>
        <end position="364"/>
    </location>
</feature>
<feature type="region of interest" description="Disordered" evidence="5">
    <location>
        <begin position="381"/>
        <end position="403"/>
    </location>
</feature>
<feature type="compositionally biased region" description="Pro residues" evidence="5">
    <location>
        <begin position="1"/>
        <end position="11"/>
    </location>
</feature>
<feature type="compositionally biased region" description="Polar residues" evidence="5">
    <location>
        <begin position="59"/>
        <end position="69"/>
    </location>
</feature>
<feature type="compositionally biased region" description="Polar residues" evidence="5">
    <location>
        <begin position="344"/>
        <end position="364"/>
    </location>
</feature>
<keyword id="KW-0472">Membrane</keyword>
<keyword id="KW-0576">Peroxisome</keyword>
<keyword id="KW-0597">Phosphoprotein</keyword>
<keyword id="KW-0653">Protein transport</keyword>
<keyword id="KW-1185">Reference proteome</keyword>
<keyword id="KW-0728">SH3 domain</keyword>
<keyword id="KW-0811">Translocation</keyword>
<keyword id="KW-0812">Transmembrane</keyword>
<keyword id="KW-1133">Transmembrane helix</keyword>
<keyword id="KW-0813">Transport</keyword>
<organism>
    <name type="scientific">Rattus norvegicus</name>
    <name type="common">Rat</name>
    <dbReference type="NCBI Taxonomy" id="10116"/>
    <lineage>
        <taxon>Eukaryota</taxon>
        <taxon>Metazoa</taxon>
        <taxon>Chordata</taxon>
        <taxon>Craniata</taxon>
        <taxon>Vertebrata</taxon>
        <taxon>Euteleostomi</taxon>
        <taxon>Mammalia</taxon>
        <taxon>Eutheria</taxon>
        <taxon>Euarchontoglires</taxon>
        <taxon>Glires</taxon>
        <taxon>Rodentia</taxon>
        <taxon>Myomorpha</taxon>
        <taxon>Muroidea</taxon>
        <taxon>Muridae</taxon>
        <taxon>Murinae</taxon>
        <taxon>Rattus</taxon>
    </lineage>
</organism>
<comment type="function">
    <text evidence="1 2">Component of the PEX13-PEX14 docking complex, a translocon channel that specifically mediates the import of peroxisomal cargo proteins bound to PEX5 receptor (By similarity). The PEX13-PEX14 docking complex forms a large import pore which can be opened to a diameter of about 9 nm (By similarity). Mechanistically, PEX5 receptor along with cargo proteins associates with the PEX14 subunit of the PEX13-PEX14 docking complex in the cytosol, leading to the insertion of the receptor into the organelle membrane with the concomitant translocation of the cargo into the peroxisome matrix. Involved in the import of PTS1- and PTS2-type containing proteins (By similarity).</text>
</comment>
<comment type="subunit">
    <text evidence="2">Interacts (via SH3 domain) with PEX14 (via SH3-binding motif); forming the PEX13-PEX14 docking complex. Interacts with PEX19.</text>
</comment>
<comment type="subcellular location">
    <subcellularLocation>
        <location evidence="6">Peroxisome membrane</location>
        <topology evidence="3">Multi-pass membrane protein</topology>
    </subcellularLocation>
</comment>
<comment type="similarity">
    <text evidence="7">Belongs to the peroxin-13 family.</text>
</comment>
<name>PEX13_RAT</name>
<dbReference type="EMBL" id="CH473996">
    <property type="protein sequence ID" value="EDL97993.1"/>
    <property type="molecule type" value="Genomic_DNA"/>
</dbReference>
<dbReference type="RefSeq" id="NP_001100712.1">
    <property type="nucleotide sequence ID" value="NM_001107242.2"/>
</dbReference>
<dbReference type="SMR" id="D4A2Y9"/>
<dbReference type="FunCoup" id="D4A2Y9">
    <property type="interactions" value="1557"/>
</dbReference>
<dbReference type="STRING" id="10116.ENSRNOP00000068751"/>
<dbReference type="PhosphoSitePlus" id="D4A2Y9"/>
<dbReference type="PaxDb" id="10116-ENSRNOP00000007854"/>
<dbReference type="PeptideAtlas" id="D4A2Y9"/>
<dbReference type="Ensembl" id="ENSRNOT00000104301.1">
    <property type="protein sequence ID" value="ENSRNOP00000097867.1"/>
    <property type="gene ID" value="ENSRNOG00000054896.2"/>
</dbReference>
<dbReference type="GeneID" id="305581"/>
<dbReference type="KEGG" id="rno:305581"/>
<dbReference type="UCSC" id="RGD:1310682">
    <property type="organism name" value="rat"/>
</dbReference>
<dbReference type="AGR" id="RGD:1310682"/>
<dbReference type="CTD" id="5194"/>
<dbReference type="RGD" id="1310682">
    <property type="gene designation" value="Pex13"/>
</dbReference>
<dbReference type="eggNOG" id="KOG3875">
    <property type="taxonomic scope" value="Eukaryota"/>
</dbReference>
<dbReference type="GeneTree" id="ENSGT00390000016883"/>
<dbReference type="HOGENOM" id="CLU_045457_0_0_1"/>
<dbReference type="InParanoid" id="D4A2Y9"/>
<dbReference type="OMA" id="EGWFPKK"/>
<dbReference type="OrthoDB" id="72098at9989"/>
<dbReference type="Reactome" id="R-RNO-8866654">
    <property type="pathway name" value="E3 ubiquitin ligases ubiquitinate target proteins"/>
</dbReference>
<dbReference type="Reactome" id="R-RNO-9033241">
    <property type="pathway name" value="Peroxisomal protein import"/>
</dbReference>
<dbReference type="Reactome" id="R-RNO-9603798">
    <property type="pathway name" value="Class I peroxisomal membrane protein import"/>
</dbReference>
<dbReference type="PRO" id="PR:D4A2Y9"/>
<dbReference type="Proteomes" id="UP000002494">
    <property type="component" value="Chromosome 14"/>
</dbReference>
<dbReference type="Proteomes" id="UP000234681">
    <property type="component" value="Chromosome 14"/>
</dbReference>
<dbReference type="Bgee" id="ENSRNOG00000054896">
    <property type="expression patterns" value="Expressed in liver and 20 other cell types or tissues"/>
</dbReference>
<dbReference type="GO" id="GO:1990429">
    <property type="term" value="C:peroxisomal importomer complex"/>
    <property type="evidence" value="ECO:0000318"/>
    <property type="project" value="GO_Central"/>
</dbReference>
<dbReference type="GO" id="GO:0005778">
    <property type="term" value="C:peroxisomal membrane"/>
    <property type="evidence" value="ECO:0000314"/>
    <property type="project" value="BHF-UCL"/>
</dbReference>
<dbReference type="GO" id="GO:0005777">
    <property type="term" value="C:peroxisome"/>
    <property type="evidence" value="ECO:0000314"/>
    <property type="project" value="RGD"/>
</dbReference>
<dbReference type="GO" id="GO:0008320">
    <property type="term" value="F:protein transmembrane transporter activity"/>
    <property type="evidence" value="ECO:0000250"/>
    <property type="project" value="UniProtKB"/>
</dbReference>
<dbReference type="GO" id="GO:0034614">
    <property type="term" value="P:cellular response to reactive oxygen species"/>
    <property type="evidence" value="ECO:0000266"/>
    <property type="project" value="RGD"/>
</dbReference>
<dbReference type="GO" id="GO:0021795">
    <property type="term" value="P:cerebral cortex cell migration"/>
    <property type="evidence" value="ECO:0000266"/>
    <property type="project" value="RGD"/>
</dbReference>
<dbReference type="GO" id="GO:0001561">
    <property type="term" value="P:fatty acid alpha-oxidation"/>
    <property type="evidence" value="ECO:0000266"/>
    <property type="project" value="RGD"/>
</dbReference>
<dbReference type="GO" id="GO:0007626">
    <property type="term" value="P:locomotory behavior"/>
    <property type="evidence" value="ECO:0000266"/>
    <property type="project" value="RGD"/>
</dbReference>
<dbReference type="GO" id="GO:0060152">
    <property type="term" value="P:microtubule-based peroxisome localization"/>
    <property type="evidence" value="ECO:0000266"/>
    <property type="project" value="RGD"/>
</dbReference>
<dbReference type="GO" id="GO:0001764">
    <property type="term" value="P:neuron migration"/>
    <property type="evidence" value="ECO:0000266"/>
    <property type="project" value="RGD"/>
</dbReference>
<dbReference type="GO" id="GO:0016560">
    <property type="term" value="P:protein import into peroxisome matrix, docking"/>
    <property type="evidence" value="ECO:0000250"/>
    <property type="project" value="UniProtKB"/>
</dbReference>
<dbReference type="GO" id="GO:0016561">
    <property type="term" value="P:protein import into peroxisome matrix, translocation"/>
    <property type="evidence" value="ECO:0000266"/>
    <property type="project" value="RGD"/>
</dbReference>
<dbReference type="GO" id="GO:0001967">
    <property type="term" value="P:suckling behavior"/>
    <property type="evidence" value="ECO:0000266"/>
    <property type="project" value="RGD"/>
</dbReference>
<dbReference type="CDD" id="cd11864">
    <property type="entry name" value="SH3_PEX13_eumet"/>
    <property type="match status" value="1"/>
</dbReference>
<dbReference type="FunFam" id="2.30.30.40:FF:000109">
    <property type="entry name" value="Peroxisomal biogenesis factor 13"/>
    <property type="match status" value="1"/>
</dbReference>
<dbReference type="Gene3D" id="2.30.30.40">
    <property type="entry name" value="SH3 Domains"/>
    <property type="match status" value="1"/>
</dbReference>
<dbReference type="InterPro" id="IPR007223">
    <property type="entry name" value="Peroxin-13_N"/>
</dbReference>
<dbReference type="InterPro" id="IPR035463">
    <property type="entry name" value="Pex13"/>
</dbReference>
<dbReference type="InterPro" id="IPR036028">
    <property type="entry name" value="SH3-like_dom_sf"/>
</dbReference>
<dbReference type="InterPro" id="IPR001452">
    <property type="entry name" value="SH3_domain"/>
</dbReference>
<dbReference type="PANTHER" id="PTHR19332">
    <property type="entry name" value="PEROXISOMAL MEMBRANE PROTEIN PEX13"/>
    <property type="match status" value="1"/>
</dbReference>
<dbReference type="PANTHER" id="PTHR19332:SF1">
    <property type="entry name" value="PEROXISOMAL MEMBRANE PROTEIN PEX13"/>
    <property type="match status" value="1"/>
</dbReference>
<dbReference type="Pfam" id="PF04088">
    <property type="entry name" value="Peroxin-13_N"/>
    <property type="match status" value="1"/>
</dbReference>
<dbReference type="Pfam" id="PF14604">
    <property type="entry name" value="SH3_9"/>
    <property type="match status" value="1"/>
</dbReference>
<dbReference type="PRINTS" id="PR00452">
    <property type="entry name" value="SH3DOMAIN"/>
</dbReference>
<dbReference type="SMART" id="SM00326">
    <property type="entry name" value="SH3"/>
    <property type="match status" value="1"/>
</dbReference>
<dbReference type="SUPFAM" id="SSF50044">
    <property type="entry name" value="SH3-domain"/>
    <property type="match status" value="1"/>
</dbReference>
<dbReference type="PROSITE" id="PS50002">
    <property type="entry name" value="SH3"/>
    <property type="match status" value="1"/>
</dbReference>
<gene>
    <name evidence="9" type="primary">Pex13</name>
</gene>
<reference key="1">
    <citation type="journal article" date="2004" name="Nature">
        <title>Genome sequence of the Brown Norway rat yields insights into mammalian evolution.</title>
        <authorList>
            <person name="Gibbs R.A."/>
            <person name="Weinstock G.M."/>
            <person name="Metzker M.L."/>
            <person name="Muzny D.M."/>
            <person name="Sodergren E.J."/>
            <person name="Scherer S."/>
            <person name="Scott G."/>
            <person name="Steffen D."/>
            <person name="Worley K.C."/>
            <person name="Burch P.E."/>
            <person name="Okwuonu G."/>
            <person name="Hines S."/>
            <person name="Lewis L."/>
            <person name="Deramo C."/>
            <person name="Delgado O."/>
            <person name="Dugan-Rocha S."/>
            <person name="Miner G."/>
            <person name="Morgan M."/>
            <person name="Hawes A."/>
            <person name="Gill R."/>
            <person name="Holt R.A."/>
            <person name="Adams M.D."/>
            <person name="Amanatides P.G."/>
            <person name="Baden-Tillson H."/>
            <person name="Barnstead M."/>
            <person name="Chin S."/>
            <person name="Evans C.A."/>
            <person name="Ferriera S."/>
            <person name="Fosler C."/>
            <person name="Glodek A."/>
            <person name="Gu Z."/>
            <person name="Jennings D."/>
            <person name="Kraft C.L."/>
            <person name="Nguyen T."/>
            <person name="Pfannkoch C.M."/>
            <person name="Sitter C."/>
            <person name="Sutton G.G."/>
            <person name="Venter J.C."/>
            <person name="Woodage T."/>
            <person name="Smith D."/>
            <person name="Lee H.-M."/>
            <person name="Gustafson E."/>
            <person name="Cahill P."/>
            <person name="Kana A."/>
            <person name="Doucette-Stamm L."/>
            <person name="Weinstock K."/>
            <person name="Fechtel K."/>
            <person name="Weiss R.B."/>
            <person name="Dunn D.M."/>
            <person name="Green E.D."/>
            <person name="Blakesley R.W."/>
            <person name="Bouffard G.G."/>
            <person name="De Jong P.J."/>
            <person name="Osoegawa K."/>
            <person name="Zhu B."/>
            <person name="Marra M."/>
            <person name="Schein J."/>
            <person name="Bosdet I."/>
            <person name="Fjell C."/>
            <person name="Jones S."/>
            <person name="Krzywinski M."/>
            <person name="Mathewson C."/>
            <person name="Siddiqui A."/>
            <person name="Wye N."/>
            <person name="McPherson J."/>
            <person name="Zhao S."/>
            <person name="Fraser C.M."/>
            <person name="Shetty J."/>
            <person name="Shatsman S."/>
            <person name="Geer K."/>
            <person name="Chen Y."/>
            <person name="Abramzon S."/>
            <person name="Nierman W.C."/>
            <person name="Havlak P.H."/>
            <person name="Chen R."/>
            <person name="Durbin K.J."/>
            <person name="Egan A."/>
            <person name="Ren Y."/>
            <person name="Song X.-Z."/>
            <person name="Li B."/>
            <person name="Liu Y."/>
            <person name="Qin X."/>
            <person name="Cawley S."/>
            <person name="Cooney A.J."/>
            <person name="D'Souza L.M."/>
            <person name="Martin K."/>
            <person name="Wu J.Q."/>
            <person name="Gonzalez-Garay M.L."/>
            <person name="Jackson A.R."/>
            <person name="Kalafus K.J."/>
            <person name="McLeod M.P."/>
            <person name="Milosavljevic A."/>
            <person name="Virk D."/>
            <person name="Volkov A."/>
            <person name="Wheeler D.A."/>
            <person name="Zhang Z."/>
            <person name="Bailey J.A."/>
            <person name="Eichler E.E."/>
            <person name="Tuzun E."/>
            <person name="Birney E."/>
            <person name="Mongin E."/>
            <person name="Ureta-Vidal A."/>
            <person name="Woodwark C."/>
            <person name="Zdobnov E."/>
            <person name="Bork P."/>
            <person name="Suyama M."/>
            <person name="Torrents D."/>
            <person name="Alexandersson M."/>
            <person name="Trask B.J."/>
            <person name="Young J.M."/>
            <person name="Huang H."/>
            <person name="Wang H."/>
            <person name="Xing H."/>
            <person name="Daniels S."/>
            <person name="Gietzen D."/>
            <person name="Schmidt J."/>
            <person name="Stevens K."/>
            <person name="Vitt U."/>
            <person name="Wingrove J."/>
            <person name="Camara F."/>
            <person name="Mar Alba M."/>
            <person name="Abril J.F."/>
            <person name="Guigo R."/>
            <person name="Smit A."/>
            <person name="Dubchak I."/>
            <person name="Rubin E.M."/>
            <person name="Couronne O."/>
            <person name="Poliakov A."/>
            <person name="Huebner N."/>
            <person name="Ganten D."/>
            <person name="Goesele C."/>
            <person name="Hummel O."/>
            <person name="Kreitler T."/>
            <person name="Lee Y.-A."/>
            <person name="Monti J."/>
            <person name="Schulz H."/>
            <person name="Zimdahl H."/>
            <person name="Himmelbauer H."/>
            <person name="Lehrach H."/>
            <person name="Jacob H.J."/>
            <person name="Bromberg S."/>
            <person name="Gullings-Handley J."/>
            <person name="Jensen-Seaman M.I."/>
            <person name="Kwitek A.E."/>
            <person name="Lazar J."/>
            <person name="Pasko D."/>
            <person name="Tonellato P.J."/>
            <person name="Twigger S."/>
            <person name="Ponting C.P."/>
            <person name="Duarte J.M."/>
            <person name="Rice S."/>
            <person name="Goodstadt L."/>
            <person name="Beatson S.A."/>
            <person name="Emes R.D."/>
            <person name="Winter E.E."/>
            <person name="Webber C."/>
            <person name="Brandt P."/>
            <person name="Nyakatura G."/>
            <person name="Adetobi M."/>
            <person name="Chiaromonte F."/>
            <person name="Elnitski L."/>
            <person name="Eswara P."/>
            <person name="Hardison R.C."/>
            <person name="Hou M."/>
            <person name="Kolbe D."/>
            <person name="Makova K."/>
            <person name="Miller W."/>
            <person name="Nekrutenko A."/>
            <person name="Riemer C."/>
            <person name="Schwartz S."/>
            <person name="Taylor J."/>
            <person name="Yang S."/>
            <person name="Zhang Y."/>
            <person name="Lindpaintner K."/>
            <person name="Andrews T.D."/>
            <person name="Caccamo M."/>
            <person name="Clamp M."/>
            <person name="Clarke L."/>
            <person name="Curwen V."/>
            <person name="Durbin R.M."/>
            <person name="Eyras E."/>
            <person name="Searle S.M."/>
            <person name="Cooper G.M."/>
            <person name="Batzoglou S."/>
            <person name="Brudno M."/>
            <person name="Sidow A."/>
            <person name="Stone E.A."/>
            <person name="Payseur B.A."/>
            <person name="Bourque G."/>
            <person name="Lopez-Otin C."/>
            <person name="Puente X.S."/>
            <person name="Chakrabarti K."/>
            <person name="Chatterji S."/>
            <person name="Dewey C."/>
            <person name="Pachter L."/>
            <person name="Bray N."/>
            <person name="Yap V.B."/>
            <person name="Caspi A."/>
            <person name="Tesler G."/>
            <person name="Pevzner P.A."/>
            <person name="Haussler D."/>
            <person name="Roskin K.M."/>
            <person name="Baertsch R."/>
            <person name="Clawson H."/>
            <person name="Furey T.S."/>
            <person name="Hinrichs A.S."/>
            <person name="Karolchik D."/>
            <person name="Kent W.J."/>
            <person name="Rosenbloom K.R."/>
            <person name="Trumbower H."/>
            <person name="Weirauch M."/>
            <person name="Cooper D.N."/>
            <person name="Stenson P.D."/>
            <person name="Ma B."/>
            <person name="Brent M."/>
            <person name="Arumugam M."/>
            <person name="Shteynberg D."/>
            <person name="Copley R.R."/>
            <person name="Taylor M.S."/>
            <person name="Riethman H."/>
            <person name="Mudunuri U."/>
            <person name="Peterson J."/>
            <person name="Guyer M."/>
            <person name="Felsenfeld A."/>
            <person name="Old S."/>
            <person name="Mockrin S."/>
            <person name="Collins F.S."/>
        </authorList>
    </citation>
    <scope>NUCLEOTIDE SEQUENCE [LARGE SCALE GENOMIC DNA]</scope>
    <source>
        <strain>Brown Norway</strain>
    </source>
</reference>
<reference key="2">
    <citation type="submission" date="2005-07" db="EMBL/GenBank/DDBJ databases">
        <authorList>
            <person name="Mural R.J."/>
            <person name="Adams M.D."/>
            <person name="Myers E.W."/>
            <person name="Smith H.O."/>
            <person name="Venter J.C."/>
        </authorList>
    </citation>
    <scope>NUCLEOTIDE SEQUENCE [LARGE SCALE GENOMIC DNA]</scope>
</reference>
<reference key="3">
    <citation type="journal article" date="2019" name="FEBS J.">
        <title>Membrane topologies of PEX13 and PEX14 provide new insights on the mechanism of protein import into peroxisomes.</title>
        <authorList>
            <person name="Barros-Barbosa A."/>
            <person name="Ferreira M.J."/>
            <person name="Rodrigues T.A."/>
            <person name="Pedrosa A.G."/>
            <person name="Grou C.P."/>
            <person name="Pinto M.P."/>
            <person name="Fransen M."/>
            <person name="Francisco T."/>
            <person name="Azevedo J.E."/>
        </authorList>
    </citation>
    <scope>SUBCELLULAR LOCATION</scope>
    <scope>TOPOLOGY</scope>
</reference>
<proteinExistence type="evidence at protein level"/>